<accession>Q12UJ8</accession>
<gene>
    <name evidence="1" type="primary">aroD</name>
    <name type="ordered locus">Mbur_1999</name>
</gene>
<proteinExistence type="inferred from homology"/>
<comment type="function">
    <text evidence="1">Involved in the third step of the chorismate pathway, which leads to the biosynthesis of aromatic amino acids. Catalyzes the cis-dehydration of 3-dehydroquinate (DHQ) and introduces the first double bond of the aromatic ring to yield 3-dehydroshikimate.</text>
</comment>
<comment type="catalytic activity">
    <reaction evidence="1">
        <text>3-dehydroquinate = 3-dehydroshikimate + H2O</text>
        <dbReference type="Rhea" id="RHEA:21096"/>
        <dbReference type="ChEBI" id="CHEBI:15377"/>
        <dbReference type="ChEBI" id="CHEBI:16630"/>
        <dbReference type="ChEBI" id="CHEBI:32364"/>
        <dbReference type="EC" id="4.2.1.10"/>
    </reaction>
</comment>
<comment type="pathway">
    <text evidence="1">Metabolic intermediate biosynthesis; chorismate biosynthesis; chorismate from D-erythrose 4-phosphate and phosphoenolpyruvate: step 3/7.</text>
</comment>
<comment type="subunit">
    <text evidence="1">Homodimer.</text>
</comment>
<comment type="similarity">
    <text evidence="1">Belongs to the type-I 3-dehydroquinase family.</text>
</comment>
<dbReference type="EC" id="4.2.1.10" evidence="1"/>
<dbReference type="EMBL" id="CP000300">
    <property type="protein sequence ID" value="ABE52878.1"/>
    <property type="molecule type" value="Genomic_DNA"/>
</dbReference>
<dbReference type="RefSeq" id="WP_011500019.1">
    <property type="nucleotide sequence ID" value="NC_007955.1"/>
</dbReference>
<dbReference type="SMR" id="Q12UJ8"/>
<dbReference type="STRING" id="259564.Mbur_1999"/>
<dbReference type="GeneID" id="3996951"/>
<dbReference type="KEGG" id="mbu:Mbur_1999"/>
<dbReference type="HOGENOM" id="CLU_064444_2_1_2"/>
<dbReference type="OrthoDB" id="34329at2157"/>
<dbReference type="UniPathway" id="UPA00053">
    <property type="reaction ID" value="UER00086"/>
</dbReference>
<dbReference type="Proteomes" id="UP000001979">
    <property type="component" value="Chromosome"/>
</dbReference>
<dbReference type="GO" id="GO:0003855">
    <property type="term" value="F:3-dehydroquinate dehydratase activity"/>
    <property type="evidence" value="ECO:0007669"/>
    <property type="project" value="UniProtKB-UniRule"/>
</dbReference>
<dbReference type="GO" id="GO:0046279">
    <property type="term" value="P:3,4-dihydroxybenzoate biosynthetic process"/>
    <property type="evidence" value="ECO:0007669"/>
    <property type="project" value="TreeGrafter"/>
</dbReference>
<dbReference type="GO" id="GO:0008652">
    <property type="term" value="P:amino acid biosynthetic process"/>
    <property type="evidence" value="ECO:0007669"/>
    <property type="project" value="UniProtKB-KW"/>
</dbReference>
<dbReference type="GO" id="GO:0009073">
    <property type="term" value="P:aromatic amino acid family biosynthetic process"/>
    <property type="evidence" value="ECO:0007669"/>
    <property type="project" value="UniProtKB-KW"/>
</dbReference>
<dbReference type="GO" id="GO:0009423">
    <property type="term" value="P:chorismate biosynthetic process"/>
    <property type="evidence" value="ECO:0007669"/>
    <property type="project" value="UniProtKB-UniRule"/>
</dbReference>
<dbReference type="CDD" id="cd00502">
    <property type="entry name" value="DHQase_I"/>
    <property type="match status" value="1"/>
</dbReference>
<dbReference type="FunFam" id="3.20.20.70:FF:000047">
    <property type="entry name" value="3-dehydroquinate dehydratase"/>
    <property type="match status" value="1"/>
</dbReference>
<dbReference type="Gene3D" id="3.20.20.70">
    <property type="entry name" value="Aldolase class I"/>
    <property type="match status" value="1"/>
</dbReference>
<dbReference type="HAMAP" id="MF_00214">
    <property type="entry name" value="AroD"/>
    <property type="match status" value="1"/>
</dbReference>
<dbReference type="InterPro" id="IPR013785">
    <property type="entry name" value="Aldolase_TIM"/>
</dbReference>
<dbReference type="InterPro" id="IPR001381">
    <property type="entry name" value="DHquinase_I"/>
</dbReference>
<dbReference type="InterPro" id="IPR050146">
    <property type="entry name" value="Type-I_3-dehydroquinase"/>
</dbReference>
<dbReference type="NCBIfam" id="TIGR01093">
    <property type="entry name" value="aroD"/>
    <property type="match status" value="1"/>
</dbReference>
<dbReference type="PANTHER" id="PTHR43699">
    <property type="entry name" value="3-DEHYDROQUINATE DEHYDRATASE"/>
    <property type="match status" value="1"/>
</dbReference>
<dbReference type="PANTHER" id="PTHR43699:SF1">
    <property type="entry name" value="3-DEHYDROQUINATE DEHYDRATASE"/>
    <property type="match status" value="1"/>
</dbReference>
<dbReference type="Pfam" id="PF01487">
    <property type="entry name" value="DHquinase_I"/>
    <property type="match status" value="1"/>
</dbReference>
<dbReference type="SUPFAM" id="SSF51569">
    <property type="entry name" value="Aldolase"/>
    <property type="match status" value="1"/>
</dbReference>
<name>AROD_METBU</name>
<sequence>MLKIGTFDLEERPAIVAAISNEPLQQCKTAAEHGADILEIRFDLLGITTSKEAANLLRMLKGTTSLPCIATNRLQSQGGNWEGTEENRIALLEDIMHLTDAVDIELETDEQLRDRIVKKAKEESKTTIISSHDFERTPDKETLKSILDHSHDAGADIAKLAVMPENMQDVLNLLEVTLEVDDVCTISMGKLGKHTRIIAPLYGSKLTYASVSDAVAPGQLKVEDLKKAMEMME</sequence>
<feature type="chain" id="PRO_1000043172" description="3-dehydroquinate dehydratase">
    <location>
        <begin position="1"/>
        <end position="233"/>
    </location>
</feature>
<feature type="active site" description="Proton donor/acceptor" evidence="1">
    <location>
        <position position="132"/>
    </location>
</feature>
<feature type="active site" description="Schiff-base intermediate with substrate" evidence="1">
    <location>
        <position position="159"/>
    </location>
</feature>
<feature type="binding site" evidence="1">
    <location>
        <begin position="39"/>
        <end position="41"/>
    </location>
    <ligand>
        <name>3-dehydroquinate</name>
        <dbReference type="ChEBI" id="CHEBI:32364"/>
    </ligand>
</feature>
<feature type="binding site" evidence="1">
    <location>
        <position position="73"/>
    </location>
    <ligand>
        <name>3-dehydroquinate</name>
        <dbReference type="ChEBI" id="CHEBI:32364"/>
    </ligand>
</feature>
<feature type="binding site" evidence="1">
    <location>
        <position position="196"/>
    </location>
    <ligand>
        <name>3-dehydroquinate</name>
        <dbReference type="ChEBI" id="CHEBI:32364"/>
    </ligand>
</feature>
<feature type="binding site" evidence="1">
    <location>
        <position position="219"/>
    </location>
    <ligand>
        <name>3-dehydroquinate</name>
        <dbReference type="ChEBI" id="CHEBI:32364"/>
    </ligand>
</feature>
<keyword id="KW-0028">Amino-acid biosynthesis</keyword>
<keyword id="KW-0057">Aromatic amino acid biosynthesis</keyword>
<keyword id="KW-0456">Lyase</keyword>
<keyword id="KW-0704">Schiff base</keyword>
<evidence type="ECO:0000255" key="1">
    <source>
        <dbReference type="HAMAP-Rule" id="MF_00214"/>
    </source>
</evidence>
<reference key="1">
    <citation type="journal article" date="2009" name="ISME J.">
        <title>The genome sequence of the psychrophilic archaeon, Methanococcoides burtonii: the role of genome evolution in cold adaptation.</title>
        <authorList>
            <person name="Allen M.A."/>
            <person name="Lauro F.M."/>
            <person name="Williams T.J."/>
            <person name="Burg D."/>
            <person name="Siddiqui K.S."/>
            <person name="De Francisci D."/>
            <person name="Chong K.W."/>
            <person name="Pilak O."/>
            <person name="Chew H.H."/>
            <person name="De Maere M.Z."/>
            <person name="Ting L."/>
            <person name="Katrib M."/>
            <person name="Ng C."/>
            <person name="Sowers K.R."/>
            <person name="Galperin M.Y."/>
            <person name="Anderson I.J."/>
            <person name="Ivanova N."/>
            <person name="Dalin E."/>
            <person name="Martinez M."/>
            <person name="Lapidus A."/>
            <person name="Hauser L."/>
            <person name="Land M."/>
            <person name="Thomas T."/>
            <person name="Cavicchioli R."/>
        </authorList>
    </citation>
    <scope>NUCLEOTIDE SEQUENCE [LARGE SCALE GENOMIC DNA]</scope>
    <source>
        <strain>DSM 6242 / NBRC 107633 / OCM 468 / ACE-M</strain>
    </source>
</reference>
<protein>
    <recommendedName>
        <fullName evidence="1">3-dehydroquinate dehydratase</fullName>
        <shortName evidence="1">3-dehydroquinase</shortName>
        <ecNumber evidence="1">4.2.1.10</ecNumber>
    </recommendedName>
    <alternativeName>
        <fullName evidence="1">Type I DHQase</fullName>
    </alternativeName>
    <alternativeName>
        <fullName evidence="1">Type I dehydroquinase</fullName>
        <shortName evidence="1">DHQ1</shortName>
    </alternativeName>
</protein>
<organism>
    <name type="scientific">Methanococcoides burtonii (strain DSM 6242 / NBRC 107633 / OCM 468 / ACE-M)</name>
    <dbReference type="NCBI Taxonomy" id="259564"/>
    <lineage>
        <taxon>Archaea</taxon>
        <taxon>Methanobacteriati</taxon>
        <taxon>Methanobacteriota</taxon>
        <taxon>Stenosarchaea group</taxon>
        <taxon>Methanomicrobia</taxon>
        <taxon>Methanosarcinales</taxon>
        <taxon>Methanosarcinaceae</taxon>
        <taxon>Methanococcoides</taxon>
    </lineage>
</organism>